<proteinExistence type="inferred from homology"/>
<name>RUVA_STRS7</name>
<organism>
    <name type="scientific">Streptococcus equi subsp. zooepidemicus (strain H70)</name>
    <dbReference type="NCBI Taxonomy" id="553483"/>
    <lineage>
        <taxon>Bacteria</taxon>
        <taxon>Bacillati</taxon>
        <taxon>Bacillota</taxon>
        <taxon>Bacilli</taxon>
        <taxon>Lactobacillales</taxon>
        <taxon>Streptococcaceae</taxon>
        <taxon>Streptococcus</taxon>
    </lineage>
</organism>
<feature type="chain" id="PRO_1000202003" description="Holliday junction branch migration complex subunit RuvA">
    <location>
        <begin position="1"/>
        <end position="198"/>
    </location>
</feature>
<feature type="region of interest" description="Domain I" evidence="1">
    <location>
        <begin position="1"/>
        <end position="63"/>
    </location>
</feature>
<feature type="region of interest" description="Domain II" evidence="1">
    <location>
        <begin position="64"/>
        <end position="142"/>
    </location>
</feature>
<feature type="region of interest" description="Flexible linker" evidence="1">
    <location>
        <begin position="143"/>
        <end position="147"/>
    </location>
</feature>
<feature type="region of interest" description="Domain III" evidence="1">
    <location>
        <begin position="148"/>
        <end position="198"/>
    </location>
</feature>
<reference key="1">
    <citation type="journal article" date="2009" name="PLoS Pathog.">
        <title>Genomic evidence for the evolution of Streptococcus equi: host restriction, increased virulence, and genetic exchange with human pathogens.</title>
        <authorList>
            <person name="Holden M.T.G."/>
            <person name="Heather Z."/>
            <person name="Paillot R."/>
            <person name="Steward K.F."/>
            <person name="Webb K."/>
            <person name="Ainslie F."/>
            <person name="Jourdan T."/>
            <person name="Bason N.C."/>
            <person name="Holroyd N.E."/>
            <person name="Mungall K."/>
            <person name="Quail M.A."/>
            <person name="Sanders M."/>
            <person name="Simmonds M."/>
            <person name="Willey D."/>
            <person name="Brooks K."/>
            <person name="Aanensen D.M."/>
            <person name="Spratt B.G."/>
            <person name="Jolley K.A."/>
            <person name="Maiden M.C.J."/>
            <person name="Kehoe M."/>
            <person name="Chanter N."/>
            <person name="Bentley S.D."/>
            <person name="Robinson C."/>
            <person name="Maskell D.J."/>
            <person name="Parkhill J."/>
            <person name="Waller A.S."/>
        </authorList>
    </citation>
    <scope>NUCLEOTIDE SEQUENCE [LARGE SCALE GENOMIC DNA]</scope>
    <source>
        <strain>H70</strain>
    </source>
</reference>
<gene>
    <name evidence="1" type="primary">ruvA</name>
    <name type="ordered locus">SZO_18700</name>
</gene>
<accession>C0MGC2</accession>
<dbReference type="EMBL" id="FM204884">
    <property type="protein sequence ID" value="CAX00805.1"/>
    <property type="molecule type" value="Genomic_DNA"/>
</dbReference>
<dbReference type="SMR" id="C0MGC2"/>
<dbReference type="KEGG" id="seq:SZO_18700"/>
<dbReference type="eggNOG" id="COG0632">
    <property type="taxonomic scope" value="Bacteria"/>
</dbReference>
<dbReference type="HOGENOM" id="CLU_087936_1_0_9"/>
<dbReference type="Proteomes" id="UP000001368">
    <property type="component" value="Chromosome"/>
</dbReference>
<dbReference type="GO" id="GO:0005737">
    <property type="term" value="C:cytoplasm"/>
    <property type="evidence" value="ECO:0007669"/>
    <property type="project" value="UniProtKB-SubCell"/>
</dbReference>
<dbReference type="GO" id="GO:0009379">
    <property type="term" value="C:Holliday junction helicase complex"/>
    <property type="evidence" value="ECO:0007669"/>
    <property type="project" value="InterPro"/>
</dbReference>
<dbReference type="GO" id="GO:0048476">
    <property type="term" value="C:Holliday junction resolvase complex"/>
    <property type="evidence" value="ECO:0007669"/>
    <property type="project" value="UniProtKB-UniRule"/>
</dbReference>
<dbReference type="GO" id="GO:0005524">
    <property type="term" value="F:ATP binding"/>
    <property type="evidence" value="ECO:0007669"/>
    <property type="project" value="InterPro"/>
</dbReference>
<dbReference type="GO" id="GO:0000400">
    <property type="term" value="F:four-way junction DNA binding"/>
    <property type="evidence" value="ECO:0007669"/>
    <property type="project" value="UniProtKB-UniRule"/>
</dbReference>
<dbReference type="GO" id="GO:0009378">
    <property type="term" value="F:four-way junction helicase activity"/>
    <property type="evidence" value="ECO:0007669"/>
    <property type="project" value="InterPro"/>
</dbReference>
<dbReference type="GO" id="GO:0006310">
    <property type="term" value="P:DNA recombination"/>
    <property type="evidence" value="ECO:0007669"/>
    <property type="project" value="UniProtKB-UniRule"/>
</dbReference>
<dbReference type="GO" id="GO:0006281">
    <property type="term" value="P:DNA repair"/>
    <property type="evidence" value="ECO:0007669"/>
    <property type="project" value="UniProtKB-UniRule"/>
</dbReference>
<dbReference type="CDD" id="cd14332">
    <property type="entry name" value="UBA_RuvA_C"/>
    <property type="match status" value="1"/>
</dbReference>
<dbReference type="Gene3D" id="1.10.150.20">
    <property type="entry name" value="5' to 3' exonuclease, C-terminal subdomain"/>
    <property type="match status" value="1"/>
</dbReference>
<dbReference type="Gene3D" id="1.10.8.10">
    <property type="entry name" value="DNA helicase RuvA subunit, C-terminal domain"/>
    <property type="match status" value="1"/>
</dbReference>
<dbReference type="Gene3D" id="2.40.50.140">
    <property type="entry name" value="Nucleic acid-binding proteins"/>
    <property type="match status" value="1"/>
</dbReference>
<dbReference type="HAMAP" id="MF_00031">
    <property type="entry name" value="DNA_HJ_migration_RuvA"/>
    <property type="match status" value="1"/>
</dbReference>
<dbReference type="InterPro" id="IPR013849">
    <property type="entry name" value="DNA_helicase_Holl-junc_RuvA_I"/>
</dbReference>
<dbReference type="InterPro" id="IPR003583">
    <property type="entry name" value="Hlx-hairpin-Hlx_DNA-bd_motif"/>
</dbReference>
<dbReference type="InterPro" id="IPR012340">
    <property type="entry name" value="NA-bd_OB-fold"/>
</dbReference>
<dbReference type="InterPro" id="IPR000085">
    <property type="entry name" value="RuvA"/>
</dbReference>
<dbReference type="InterPro" id="IPR010994">
    <property type="entry name" value="RuvA_2-like"/>
</dbReference>
<dbReference type="InterPro" id="IPR011114">
    <property type="entry name" value="RuvA_C"/>
</dbReference>
<dbReference type="InterPro" id="IPR036267">
    <property type="entry name" value="RuvA_C_sf"/>
</dbReference>
<dbReference type="NCBIfam" id="TIGR00084">
    <property type="entry name" value="ruvA"/>
    <property type="match status" value="1"/>
</dbReference>
<dbReference type="Pfam" id="PF14520">
    <property type="entry name" value="HHH_5"/>
    <property type="match status" value="1"/>
</dbReference>
<dbReference type="Pfam" id="PF07499">
    <property type="entry name" value="RuvA_C"/>
    <property type="match status" value="1"/>
</dbReference>
<dbReference type="Pfam" id="PF01330">
    <property type="entry name" value="RuvA_N"/>
    <property type="match status" value="1"/>
</dbReference>
<dbReference type="SMART" id="SM00278">
    <property type="entry name" value="HhH1"/>
    <property type="match status" value="2"/>
</dbReference>
<dbReference type="SUPFAM" id="SSF46929">
    <property type="entry name" value="DNA helicase RuvA subunit, C-terminal domain"/>
    <property type="match status" value="1"/>
</dbReference>
<dbReference type="SUPFAM" id="SSF50249">
    <property type="entry name" value="Nucleic acid-binding proteins"/>
    <property type="match status" value="1"/>
</dbReference>
<dbReference type="SUPFAM" id="SSF47781">
    <property type="entry name" value="RuvA domain 2-like"/>
    <property type="match status" value="1"/>
</dbReference>
<protein>
    <recommendedName>
        <fullName evidence="1">Holliday junction branch migration complex subunit RuvA</fullName>
    </recommendedName>
</protein>
<evidence type="ECO:0000255" key="1">
    <source>
        <dbReference type="HAMAP-Rule" id="MF_00031"/>
    </source>
</evidence>
<comment type="function">
    <text evidence="1">The RuvA-RuvB-RuvC complex processes Holliday junction (HJ) DNA during genetic recombination and DNA repair, while the RuvA-RuvB complex plays an important role in the rescue of blocked DNA replication forks via replication fork reversal (RFR). RuvA specifically binds to HJ cruciform DNA, conferring on it an open structure. The RuvB hexamer acts as an ATP-dependent pump, pulling dsDNA into and through the RuvAB complex. HJ branch migration allows RuvC to scan DNA until it finds its consensus sequence, where it cleaves and resolves the cruciform DNA.</text>
</comment>
<comment type="subunit">
    <text evidence="1">Homotetramer. Forms an RuvA(8)-RuvB(12)-Holliday junction (HJ) complex. HJ DNA is sandwiched between 2 RuvA tetramers; dsDNA enters through RuvA and exits via RuvB. An RuvB hexamer assembles on each DNA strand where it exits the tetramer. Each RuvB hexamer is contacted by two RuvA subunits (via domain III) on 2 adjacent RuvB subunits; this complex drives branch migration. In the full resolvosome a probable DNA-RuvA(4)-RuvB(12)-RuvC(2) complex forms which resolves the HJ.</text>
</comment>
<comment type="subcellular location">
    <subcellularLocation>
        <location evidence="1">Cytoplasm</location>
    </subcellularLocation>
</comment>
<comment type="domain">
    <text evidence="1">Has three domains with a flexible linker between the domains II and III and assumes an 'L' shape. Domain III is highly mobile and contacts RuvB.</text>
</comment>
<comment type="similarity">
    <text evidence="1">Belongs to the RuvA family.</text>
</comment>
<sequence length="198" mass="22005">MYDYIKGQLTKITAKYIVVEANGLGYMITVANPYSFTDCVNQQVTIYLHQVIREDAQLLFGFHSEEEKDVFLKLISVSGIGPTTALAIVAVDDNRGLVNAIDNSDIKYLMRFPKIGKKTAQQMVLDLAGKFVEAPKEESSKPPKAKQQGNEQLDEAVEALLALGYKATELKKIRAFFEGTSETAEQYIKSALKMLMKG</sequence>
<keyword id="KW-0963">Cytoplasm</keyword>
<keyword id="KW-0227">DNA damage</keyword>
<keyword id="KW-0233">DNA recombination</keyword>
<keyword id="KW-0234">DNA repair</keyword>
<keyword id="KW-0238">DNA-binding</keyword>